<dbReference type="EMBL" id="AF394554">
    <property type="protein sequence ID" value="AAL24490.1"/>
    <property type="molecule type" value="Genomic_DNA"/>
</dbReference>
<dbReference type="EMBL" id="DQ061060">
    <property type="protein sequence ID" value="AAY63551.1"/>
    <property type="molecule type" value="mRNA"/>
</dbReference>
<dbReference type="EMBL" id="AC105730">
    <property type="protein sequence ID" value="AAM51840.1"/>
    <property type="molecule type" value="Genomic_DNA"/>
</dbReference>
<dbReference type="EMBL" id="DP000009">
    <property type="protein sequence ID" value="ABF94056.1"/>
    <property type="molecule type" value="Genomic_DNA"/>
</dbReference>
<dbReference type="EMBL" id="AP008209">
    <property type="protein sequence ID" value="BAF10921.1"/>
    <property type="molecule type" value="Genomic_DNA"/>
</dbReference>
<dbReference type="EMBL" id="AP014959">
    <property type="protein sequence ID" value="BAS82364.1"/>
    <property type="molecule type" value="Genomic_DNA"/>
</dbReference>
<dbReference type="EMBL" id="CM000140">
    <property type="protein sequence ID" value="EAZ25634.1"/>
    <property type="molecule type" value="Genomic_DNA"/>
</dbReference>
<dbReference type="RefSeq" id="XP_015629981.1">
    <property type="nucleotide sequence ID" value="XM_015774495.1"/>
</dbReference>
<dbReference type="SMR" id="Q7G6Z5"/>
<dbReference type="STRING" id="39947.Q7G6Z5"/>
<dbReference type="GlyCosmos" id="Q7G6Z5">
    <property type="glycosylation" value="2 sites, No reported glycans"/>
</dbReference>
<dbReference type="PaxDb" id="39947-Q7G6Z5"/>
<dbReference type="EnsemblPlants" id="Os03t0156000-00">
    <property type="protein sequence ID" value="Os03t0156000-00"/>
    <property type="gene ID" value="Os03g0156000"/>
</dbReference>
<dbReference type="Gramene" id="Os03t0156000-00">
    <property type="protein sequence ID" value="Os03t0156000-00"/>
    <property type="gene ID" value="Os03g0156000"/>
</dbReference>
<dbReference type="KEGG" id="dosa:Os03g0156000"/>
<dbReference type="eggNOG" id="ENOG502RRPH">
    <property type="taxonomic scope" value="Eukaryota"/>
</dbReference>
<dbReference type="HOGENOM" id="CLU_027462_0_3_1"/>
<dbReference type="InParanoid" id="Q7G6Z5"/>
<dbReference type="OMA" id="TSTDWIP"/>
<dbReference type="OrthoDB" id="636220at2759"/>
<dbReference type="Proteomes" id="UP000000763">
    <property type="component" value="Chromosome 3"/>
</dbReference>
<dbReference type="Proteomes" id="UP000007752">
    <property type="component" value="Chromosome 3"/>
</dbReference>
<dbReference type="Proteomes" id="UP000059680">
    <property type="component" value="Chromosome 3"/>
</dbReference>
<dbReference type="GO" id="GO:0005576">
    <property type="term" value="C:extracellular region"/>
    <property type="evidence" value="ECO:0007669"/>
    <property type="project" value="UniProtKB-KW"/>
</dbReference>
<dbReference type="GO" id="GO:0016020">
    <property type="term" value="C:membrane"/>
    <property type="evidence" value="ECO:0007669"/>
    <property type="project" value="UniProtKB-SubCell"/>
</dbReference>
<dbReference type="GO" id="GO:0009828">
    <property type="term" value="P:plant-type cell wall loosening"/>
    <property type="evidence" value="ECO:0000250"/>
    <property type="project" value="UniProtKB"/>
</dbReference>
<dbReference type="CDD" id="cd22274">
    <property type="entry name" value="DPBB_EXPA_N"/>
    <property type="match status" value="1"/>
</dbReference>
<dbReference type="Gene3D" id="2.60.40.760">
    <property type="entry name" value="Expansin, cellulose-binding-like domain"/>
    <property type="match status" value="1"/>
</dbReference>
<dbReference type="Gene3D" id="2.40.40.10">
    <property type="entry name" value="RlpA-like domain"/>
    <property type="match status" value="1"/>
</dbReference>
<dbReference type="InterPro" id="IPR007118">
    <property type="entry name" value="Expan_Lol_pI"/>
</dbReference>
<dbReference type="InterPro" id="IPR002963">
    <property type="entry name" value="Expansin"/>
</dbReference>
<dbReference type="InterPro" id="IPR007112">
    <property type="entry name" value="Expansin/allergen_DPBB_dom"/>
</dbReference>
<dbReference type="InterPro" id="IPR007117">
    <property type="entry name" value="Expansin_CBD"/>
</dbReference>
<dbReference type="InterPro" id="IPR036749">
    <property type="entry name" value="Expansin_CBD_sf"/>
</dbReference>
<dbReference type="InterPro" id="IPR009009">
    <property type="entry name" value="RlpA-like_DPBB"/>
</dbReference>
<dbReference type="InterPro" id="IPR036908">
    <property type="entry name" value="RlpA-like_sf"/>
</dbReference>
<dbReference type="PANTHER" id="PTHR31867">
    <property type="entry name" value="EXPANSIN-A15"/>
    <property type="match status" value="1"/>
</dbReference>
<dbReference type="Pfam" id="PF03330">
    <property type="entry name" value="DPBB_1"/>
    <property type="match status" value="1"/>
</dbReference>
<dbReference type="Pfam" id="PF01357">
    <property type="entry name" value="Expansin_C"/>
    <property type="match status" value="1"/>
</dbReference>
<dbReference type="PRINTS" id="PR01226">
    <property type="entry name" value="EXPANSIN"/>
</dbReference>
<dbReference type="PRINTS" id="PR01225">
    <property type="entry name" value="EXPANSNFAMLY"/>
</dbReference>
<dbReference type="SMART" id="SM00837">
    <property type="entry name" value="DPBB_1"/>
    <property type="match status" value="1"/>
</dbReference>
<dbReference type="SUPFAM" id="SSF50685">
    <property type="entry name" value="Barwin-like endoglucanases"/>
    <property type="match status" value="1"/>
</dbReference>
<dbReference type="SUPFAM" id="SSF49590">
    <property type="entry name" value="PHL pollen allergen"/>
    <property type="match status" value="1"/>
</dbReference>
<dbReference type="PROSITE" id="PS50843">
    <property type="entry name" value="EXPANSIN_CBD"/>
    <property type="match status" value="1"/>
</dbReference>
<dbReference type="PROSITE" id="PS50842">
    <property type="entry name" value="EXPANSIN_EG45"/>
    <property type="match status" value="1"/>
</dbReference>
<organism>
    <name type="scientific">Oryza sativa subsp. japonica</name>
    <name type="common">Rice</name>
    <dbReference type="NCBI Taxonomy" id="39947"/>
    <lineage>
        <taxon>Eukaryota</taxon>
        <taxon>Viridiplantae</taxon>
        <taxon>Streptophyta</taxon>
        <taxon>Embryophyta</taxon>
        <taxon>Tracheophyta</taxon>
        <taxon>Spermatophyta</taxon>
        <taxon>Magnoliopsida</taxon>
        <taxon>Liliopsida</taxon>
        <taxon>Poales</taxon>
        <taxon>Poaceae</taxon>
        <taxon>BOP clade</taxon>
        <taxon>Oryzoideae</taxon>
        <taxon>Oryzeae</taxon>
        <taxon>Oryzinae</taxon>
        <taxon>Oryza</taxon>
        <taxon>Oryza sativa</taxon>
    </lineage>
</organism>
<sequence>MGNIFLQLLAVVALCIAPARSDWLPGTATFYGGADGSGTMGGACGYGNLYDQGYGINNAALSTPLFNDGASCGQCYLIICDYSKAPDWCKLGKAITVTGTNYCPPNYDLPYGGWCNATRPHFDMSQPAWENIGIYNAGIIPILYQQVKCWRYGGVRFTINGFNYFELVLVTNMAGSGSIASMSVKGSCTGWIQMTRNWGANWQCLAGLAGQALSFNVTSTGGQTIVFDDAVPAGWSFGQTFSTYHQFDY</sequence>
<evidence type="ECO:0000250" key="1"/>
<evidence type="ECO:0000255" key="2"/>
<evidence type="ECO:0000255" key="3">
    <source>
        <dbReference type="PROSITE-ProRule" id="PRU00078"/>
    </source>
</evidence>
<evidence type="ECO:0000255" key="4">
    <source>
        <dbReference type="PROSITE-ProRule" id="PRU00079"/>
    </source>
</evidence>
<evidence type="ECO:0000305" key="5"/>
<evidence type="ECO:0000312" key="6">
    <source>
        <dbReference type="EMBL" id="EAZ25634.1"/>
    </source>
</evidence>
<proteinExistence type="evidence at transcript level"/>
<name>EXP19_ORYSJ</name>
<accession>Q7G6Z5</accession>
<accession>Q0DV17</accession>
<accession>Q946I3</accession>
<comment type="function">
    <text evidence="1">May cause loosening and extension of plant cell walls by disrupting non-covalent bonding between cellulose microfibrils and matrix glucans. No enzymatic activity has been found. May be required for rapid internodal elongation in deepwater rice during submergence (By similarity).</text>
</comment>
<comment type="subcellular location">
    <subcellularLocation>
        <location evidence="1">Secreted</location>
        <location evidence="1">Cell wall</location>
    </subcellularLocation>
    <subcellularLocation>
        <location evidence="1">Membrane</location>
        <topology evidence="1">Peripheral membrane protein</topology>
    </subcellularLocation>
</comment>
<comment type="similarity">
    <text evidence="5">Belongs to the expansin family. Expansin A subfamily.</text>
</comment>
<comment type="online information" name="EXPANSIN homepage">
    <link uri="https://www.dept.psu.edu/biology/groups/expansins/index.htm"/>
</comment>
<protein>
    <recommendedName>
        <fullName>Expansin-A19</fullName>
    </recommendedName>
    <alternativeName>
        <fullName>Alpha-expansin-19</fullName>
    </alternativeName>
    <alternativeName>
        <fullName>OsEXP19</fullName>
    </alternativeName>
    <alternativeName>
        <fullName>OsEXPA19</fullName>
    </alternativeName>
    <alternativeName>
        <fullName>OsaEXPa1.2</fullName>
    </alternativeName>
</protein>
<reference key="1">
    <citation type="journal article" date="2002" name="Plant Physiol.">
        <title>Expression of alpha-expansin and expansin-like genes in deepwater rice.</title>
        <authorList>
            <person name="Lee Y."/>
            <person name="Kende H."/>
        </authorList>
    </citation>
    <scope>NUCLEOTIDE SEQUENCE [GENOMIC DNA]</scope>
</reference>
<reference key="2">
    <citation type="journal article" date="2005" name="Mol. Cells">
        <title>Characterization and transcriptional expression of the alpha-expansin gene family in rice.</title>
        <authorList>
            <person name="Shin J.-H."/>
            <person name="Jeong D.-H."/>
            <person name="Park M.C."/>
            <person name="An G."/>
        </authorList>
    </citation>
    <scope>NUCLEOTIDE SEQUENCE [MRNA]</scope>
    <source>
        <strain>cv. Dongjin</strain>
    </source>
</reference>
<reference key="3">
    <citation type="journal article" date="2005" name="Genome Res.">
        <title>Sequence, annotation, and analysis of synteny between rice chromosome 3 and diverged grass species.</title>
        <authorList>
            <consortium name="The rice chromosome 3 sequencing consortium"/>
            <person name="Buell C.R."/>
            <person name="Yuan Q."/>
            <person name="Ouyang S."/>
            <person name="Liu J."/>
            <person name="Zhu W."/>
            <person name="Wang A."/>
            <person name="Maiti R."/>
            <person name="Haas B."/>
            <person name="Wortman J."/>
            <person name="Pertea M."/>
            <person name="Jones K.M."/>
            <person name="Kim M."/>
            <person name="Overton L."/>
            <person name="Tsitrin T."/>
            <person name="Fadrosh D."/>
            <person name="Bera J."/>
            <person name="Weaver B."/>
            <person name="Jin S."/>
            <person name="Johri S."/>
            <person name="Reardon M."/>
            <person name="Webb K."/>
            <person name="Hill J."/>
            <person name="Moffat K."/>
            <person name="Tallon L."/>
            <person name="Van Aken S."/>
            <person name="Lewis M."/>
            <person name="Utterback T."/>
            <person name="Feldblyum T."/>
            <person name="Zismann V."/>
            <person name="Iobst S."/>
            <person name="Hsiao J."/>
            <person name="de Vazeille A.R."/>
            <person name="Salzberg S.L."/>
            <person name="White O."/>
            <person name="Fraser C.M."/>
            <person name="Yu Y."/>
            <person name="Kim H."/>
            <person name="Rambo T."/>
            <person name="Currie J."/>
            <person name="Collura K."/>
            <person name="Kernodle-Thompson S."/>
            <person name="Wei F."/>
            <person name="Kudrna K."/>
            <person name="Ammiraju J.S.S."/>
            <person name="Luo M."/>
            <person name="Goicoechea J.L."/>
            <person name="Wing R.A."/>
            <person name="Henry D."/>
            <person name="Oates R."/>
            <person name="Palmer M."/>
            <person name="Pries G."/>
            <person name="Saski C."/>
            <person name="Simmons J."/>
            <person name="Soderlund C."/>
            <person name="Nelson W."/>
            <person name="de la Bastide M."/>
            <person name="Spiegel L."/>
            <person name="Nascimento L."/>
            <person name="Huang E."/>
            <person name="Preston R."/>
            <person name="Zutavern T."/>
            <person name="Palmer L."/>
            <person name="O'Shaughnessy A."/>
            <person name="Dike S."/>
            <person name="McCombie W.R."/>
            <person name="Minx P."/>
            <person name="Cordum H."/>
            <person name="Wilson R."/>
            <person name="Jin W."/>
            <person name="Lee H.R."/>
            <person name="Jiang J."/>
            <person name="Jackson S."/>
        </authorList>
    </citation>
    <scope>NUCLEOTIDE SEQUENCE [LARGE SCALE GENOMIC DNA]</scope>
    <source>
        <strain>cv. Nipponbare</strain>
    </source>
</reference>
<reference key="4">
    <citation type="journal article" date="2005" name="Nature">
        <title>The map-based sequence of the rice genome.</title>
        <authorList>
            <consortium name="International rice genome sequencing project (IRGSP)"/>
        </authorList>
    </citation>
    <scope>NUCLEOTIDE SEQUENCE [LARGE SCALE GENOMIC DNA]</scope>
    <source>
        <strain>cv. Nipponbare</strain>
    </source>
</reference>
<reference key="5">
    <citation type="journal article" date="2008" name="Nucleic Acids Res.">
        <title>The rice annotation project database (RAP-DB): 2008 update.</title>
        <authorList>
            <consortium name="The rice annotation project (RAP)"/>
        </authorList>
    </citation>
    <scope>GENOME REANNOTATION</scope>
    <source>
        <strain>cv. Nipponbare</strain>
    </source>
</reference>
<reference key="6">
    <citation type="journal article" date="2013" name="Rice">
        <title>Improvement of the Oryza sativa Nipponbare reference genome using next generation sequence and optical map data.</title>
        <authorList>
            <person name="Kawahara Y."/>
            <person name="de la Bastide M."/>
            <person name="Hamilton J.P."/>
            <person name="Kanamori H."/>
            <person name="McCombie W.R."/>
            <person name="Ouyang S."/>
            <person name="Schwartz D.C."/>
            <person name="Tanaka T."/>
            <person name="Wu J."/>
            <person name="Zhou S."/>
            <person name="Childs K.L."/>
            <person name="Davidson R.M."/>
            <person name="Lin H."/>
            <person name="Quesada-Ocampo L."/>
            <person name="Vaillancourt B."/>
            <person name="Sakai H."/>
            <person name="Lee S.S."/>
            <person name="Kim J."/>
            <person name="Numa H."/>
            <person name="Itoh T."/>
            <person name="Buell C.R."/>
            <person name="Matsumoto T."/>
        </authorList>
    </citation>
    <scope>GENOME REANNOTATION</scope>
    <source>
        <strain>cv. Nipponbare</strain>
    </source>
</reference>
<reference key="7">
    <citation type="journal article" date="2005" name="PLoS Biol.">
        <title>The genomes of Oryza sativa: a history of duplications.</title>
        <authorList>
            <person name="Yu J."/>
            <person name="Wang J."/>
            <person name="Lin W."/>
            <person name="Li S."/>
            <person name="Li H."/>
            <person name="Zhou J."/>
            <person name="Ni P."/>
            <person name="Dong W."/>
            <person name="Hu S."/>
            <person name="Zeng C."/>
            <person name="Zhang J."/>
            <person name="Zhang Y."/>
            <person name="Li R."/>
            <person name="Xu Z."/>
            <person name="Li S."/>
            <person name="Li X."/>
            <person name="Zheng H."/>
            <person name="Cong L."/>
            <person name="Lin L."/>
            <person name="Yin J."/>
            <person name="Geng J."/>
            <person name="Li G."/>
            <person name="Shi J."/>
            <person name="Liu J."/>
            <person name="Lv H."/>
            <person name="Li J."/>
            <person name="Wang J."/>
            <person name="Deng Y."/>
            <person name="Ran L."/>
            <person name="Shi X."/>
            <person name="Wang X."/>
            <person name="Wu Q."/>
            <person name="Li C."/>
            <person name="Ren X."/>
            <person name="Wang J."/>
            <person name="Wang X."/>
            <person name="Li D."/>
            <person name="Liu D."/>
            <person name="Zhang X."/>
            <person name="Ji Z."/>
            <person name="Zhao W."/>
            <person name="Sun Y."/>
            <person name="Zhang Z."/>
            <person name="Bao J."/>
            <person name="Han Y."/>
            <person name="Dong L."/>
            <person name="Ji J."/>
            <person name="Chen P."/>
            <person name="Wu S."/>
            <person name="Liu J."/>
            <person name="Xiao Y."/>
            <person name="Bu D."/>
            <person name="Tan J."/>
            <person name="Yang L."/>
            <person name="Ye C."/>
            <person name="Zhang J."/>
            <person name="Xu J."/>
            <person name="Zhou Y."/>
            <person name="Yu Y."/>
            <person name="Zhang B."/>
            <person name="Zhuang S."/>
            <person name="Wei H."/>
            <person name="Liu B."/>
            <person name="Lei M."/>
            <person name="Yu H."/>
            <person name="Li Y."/>
            <person name="Xu H."/>
            <person name="Wei S."/>
            <person name="He X."/>
            <person name="Fang L."/>
            <person name="Zhang Z."/>
            <person name="Zhang Y."/>
            <person name="Huang X."/>
            <person name="Su Z."/>
            <person name="Tong W."/>
            <person name="Li J."/>
            <person name="Tong Z."/>
            <person name="Li S."/>
            <person name="Ye J."/>
            <person name="Wang L."/>
            <person name="Fang L."/>
            <person name="Lei T."/>
            <person name="Chen C.-S."/>
            <person name="Chen H.-C."/>
            <person name="Xu Z."/>
            <person name="Li H."/>
            <person name="Huang H."/>
            <person name="Zhang F."/>
            <person name="Xu H."/>
            <person name="Li N."/>
            <person name="Zhao C."/>
            <person name="Li S."/>
            <person name="Dong L."/>
            <person name="Huang Y."/>
            <person name="Li L."/>
            <person name="Xi Y."/>
            <person name="Qi Q."/>
            <person name="Li W."/>
            <person name="Zhang B."/>
            <person name="Hu W."/>
            <person name="Zhang Y."/>
            <person name="Tian X."/>
            <person name="Jiao Y."/>
            <person name="Liang X."/>
            <person name="Jin J."/>
            <person name="Gao L."/>
            <person name="Zheng W."/>
            <person name="Hao B."/>
            <person name="Liu S.-M."/>
            <person name="Wang W."/>
            <person name="Yuan L."/>
            <person name="Cao M."/>
            <person name="McDermott J."/>
            <person name="Samudrala R."/>
            <person name="Wang J."/>
            <person name="Wong G.K.-S."/>
            <person name="Yang H."/>
        </authorList>
    </citation>
    <scope>NUCLEOTIDE SEQUENCE [LARGE SCALE GENOMIC DNA]</scope>
    <source>
        <strain>cv. Nipponbare</strain>
    </source>
</reference>
<reference key="8">
    <citation type="journal article" date="2004" name="Plant Mol. Biol.">
        <title>Nomenclature for members of the expansin superfamily of genes and proteins.</title>
        <authorList>
            <person name="Kende H."/>
            <person name="Bradford K.J."/>
            <person name="Brummell D.A."/>
            <person name="Cho H.-T."/>
            <person name="Cosgrove D.J."/>
            <person name="Fleming A.J."/>
            <person name="Gehring C."/>
            <person name="Lee Y."/>
            <person name="McQueen-Mason S.J."/>
            <person name="Rose J.K.C."/>
            <person name="Voesenek L.A.C."/>
        </authorList>
    </citation>
    <scope>NOMENCLATURE</scope>
</reference>
<feature type="signal peptide" evidence="2">
    <location>
        <begin position="1"/>
        <end position="21"/>
    </location>
</feature>
<feature type="chain" id="PRO_0000251998" description="Expansin-A19">
    <location>
        <begin position="22"/>
        <end position="249"/>
    </location>
</feature>
<feature type="domain" description="Expansin-like EG45" evidence="4">
    <location>
        <begin position="41"/>
        <end position="154"/>
    </location>
</feature>
<feature type="domain" description="Expansin-like CBD" evidence="3">
    <location>
        <begin position="164"/>
        <end position="243"/>
    </location>
</feature>
<feature type="glycosylation site" description="N-linked (GlcNAc...) asparagine" evidence="2">
    <location>
        <position position="116"/>
    </location>
</feature>
<feature type="glycosylation site" description="N-linked (GlcNAc...) asparagine" evidence="2">
    <location>
        <position position="216"/>
    </location>
</feature>
<keyword id="KW-0134">Cell wall</keyword>
<keyword id="KW-0961">Cell wall biogenesis/degradation</keyword>
<keyword id="KW-0325">Glycoprotein</keyword>
<keyword id="KW-0472">Membrane</keyword>
<keyword id="KW-1185">Reference proteome</keyword>
<keyword id="KW-0964">Secreted</keyword>
<keyword id="KW-0732">Signal</keyword>
<gene>
    <name type="primary">EXPA19</name>
    <name type="synonym">EXP19</name>
    <name type="ordered locus">Os03g0156000</name>
    <name type="ordered locus">LOC_Os03g06050</name>
    <name evidence="6" type="ORF">OsJ_09462</name>
    <name type="ORF">OSJNBa0011L14.14</name>
</gene>